<organism>
    <name type="scientific">Homo sapiens</name>
    <name type="common">Human</name>
    <dbReference type="NCBI Taxonomy" id="9606"/>
    <lineage>
        <taxon>Eukaryota</taxon>
        <taxon>Metazoa</taxon>
        <taxon>Chordata</taxon>
        <taxon>Craniata</taxon>
        <taxon>Vertebrata</taxon>
        <taxon>Euteleostomi</taxon>
        <taxon>Mammalia</taxon>
        <taxon>Eutheria</taxon>
        <taxon>Euarchontoglires</taxon>
        <taxon>Primates</taxon>
        <taxon>Haplorrhini</taxon>
        <taxon>Catarrhini</taxon>
        <taxon>Hominidae</taxon>
        <taxon>Homo</taxon>
    </lineage>
</organism>
<evidence type="ECO:0000250" key="1">
    <source>
        <dbReference type="UniProtKB" id="P07846"/>
    </source>
</evidence>
<evidence type="ECO:0000250" key="2">
    <source>
        <dbReference type="UniProtKB" id="Q64442"/>
    </source>
</evidence>
<evidence type="ECO:0000269" key="3">
    <source>
    </source>
</evidence>
<evidence type="ECO:0000269" key="4">
    <source>
    </source>
</evidence>
<evidence type="ECO:0000269" key="5">
    <source>
    </source>
</evidence>
<evidence type="ECO:0000269" key="6">
    <source>
    </source>
</evidence>
<evidence type="ECO:0000269" key="7">
    <source>
    </source>
</evidence>
<evidence type="ECO:0000269" key="8">
    <source>
    </source>
</evidence>
<evidence type="ECO:0000269" key="9">
    <source>
    </source>
</evidence>
<evidence type="ECO:0000269" key="10">
    <source>
    </source>
</evidence>
<evidence type="ECO:0000269" key="11">
    <source>
    </source>
</evidence>
<evidence type="ECO:0000269" key="12">
    <source>
    </source>
</evidence>
<evidence type="ECO:0000269" key="13">
    <source>
    </source>
</evidence>
<evidence type="ECO:0000269" key="14">
    <source>
    </source>
</evidence>
<evidence type="ECO:0000269" key="15">
    <source>
    </source>
</evidence>
<evidence type="ECO:0000269" key="16">
    <source>
    </source>
</evidence>
<evidence type="ECO:0000269" key="17">
    <source>
    </source>
</evidence>
<evidence type="ECO:0000303" key="18">
    <source>
    </source>
</evidence>
<evidence type="ECO:0000303" key="19">
    <source>
    </source>
</evidence>
<evidence type="ECO:0000303" key="20">
    <source>
    </source>
</evidence>
<evidence type="ECO:0000303" key="21">
    <source>
    </source>
</evidence>
<evidence type="ECO:0000303" key="22">
    <source>
    </source>
</evidence>
<evidence type="ECO:0000303" key="23">
    <source>
    </source>
</evidence>
<evidence type="ECO:0000305" key="24"/>
<evidence type="ECO:0000305" key="25">
    <source>
    </source>
</evidence>
<evidence type="ECO:0000305" key="26">
    <source>
    </source>
</evidence>
<evidence type="ECO:0007744" key="27">
    <source>
        <dbReference type="PDB" id="1PL6"/>
    </source>
</evidence>
<evidence type="ECO:0007744" key="28">
    <source>
        <dbReference type="PDB" id="1PL7"/>
    </source>
</evidence>
<evidence type="ECO:0007744" key="29">
    <source>
        <dbReference type="PDB" id="1PL8"/>
    </source>
</evidence>
<evidence type="ECO:0007744" key="30">
    <source>
    </source>
</evidence>
<evidence type="ECO:0007744" key="31">
    <source>
    </source>
</evidence>
<evidence type="ECO:0007744" key="32">
    <source>
    </source>
</evidence>
<evidence type="ECO:0007829" key="33">
    <source>
        <dbReference type="PDB" id="1PL8"/>
    </source>
</evidence>
<feature type="initiator methionine" description="Removed" evidence="3 10 30 32">
    <location>
        <position position="1"/>
    </location>
</feature>
<feature type="chain" id="PRO_0000160817" description="Sorbitol dehydrogenase">
    <location>
        <begin position="2"/>
        <end position="357"/>
    </location>
</feature>
<feature type="binding site" evidence="4 28 29">
    <location>
        <position position="45"/>
    </location>
    <ligand>
        <name>Zn(2+)</name>
        <dbReference type="ChEBI" id="CHEBI:29105"/>
        <note>catalytic</note>
    </ligand>
</feature>
<feature type="binding site" evidence="1">
    <location>
        <position position="51"/>
    </location>
    <ligand>
        <name>substrate</name>
    </ligand>
</feature>
<feature type="binding site" evidence="4 28 29">
    <location>
        <position position="70"/>
    </location>
    <ligand>
        <name>Zn(2+)</name>
        <dbReference type="ChEBI" id="CHEBI:29105"/>
        <note>catalytic</note>
    </ligand>
</feature>
<feature type="binding site" evidence="4 28 29">
    <location>
        <position position="71"/>
    </location>
    <ligand>
        <name>Zn(2+)</name>
        <dbReference type="ChEBI" id="CHEBI:29105"/>
        <note>catalytic</note>
    </ligand>
</feature>
<feature type="binding site" evidence="1">
    <location>
        <position position="156"/>
    </location>
    <ligand>
        <name>substrate</name>
    </ligand>
</feature>
<feature type="binding site" evidence="4 27 29">
    <location>
        <position position="184"/>
    </location>
    <ligand>
        <name>NAD(+)</name>
        <dbReference type="ChEBI" id="CHEBI:57540"/>
    </ligand>
</feature>
<feature type="binding site" evidence="4 27 29">
    <location>
        <position position="204"/>
    </location>
    <ligand>
        <name>NAD(+)</name>
        <dbReference type="ChEBI" id="CHEBI:57540"/>
    </ligand>
</feature>
<feature type="binding site" evidence="4 27 29">
    <location>
        <position position="209"/>
    </location>
    <ligand>
        <name>NAD(+)</name>
        <dbReference type="ChEBI" id="CHEBI:57540"/>
    </ligand>
</feature>
<feature type="binding site" evidence="4 27 29">
    <location>
        <begin position="273"/>
        <end position="275"/>
    </location>
    <ligand>
        <name>NAD(+)</name>
        <dbReference type="ChEBI" id="CHEBI:57540"/>
    </ligand>
</feature>
<feature type="binding site" evidence="4 27 29">
    <location>
        <begin position="297"/>
        <end position="299"/>
    </location>
    <ligand>
        <name>NAD(+)</name>
        <dbReference type="ChEBI" id="CHEBI:57540"/>
    </ligand>
</feature>
<feature type="binding site" evidence="1">
    <location>
        <position position="299"/>
    </location>
    <ligand>
        <name>substrate</name>
    </ligand>
</feature>
<feature type="binding site" evidence="1">
    <location>
        <position position="300"/>
    </location>
    <ligand>
        <name>substrate</name>
    </ligand>
</feature>
<feature type="modified residue" description="N-acetylalanine" evidence="30 32">
    <location>
        <position position="2"/>
    </location>
</feature>
<feature type="modified residue" description="Phosphoserine" evidence="31">
    <location>
        <position position="211"/>
    </location>
</feature>
<feature type="modified residue" description="Phosphoserine" evidence="31">
    <location>
        <position position="225"/>
    </location>
</feature>
<feature type="splice variant" id="VSP_056353" description="In isoform 2." evidence="19">
    <original>DRVAIEPGAP</original>
    <variation>FLTMSPLRKA</variation>
    <location>
        <begin position="90"/>
        <end position="99"/>
    </location>
</feature>
<feature type="splice variant" id="VSP_056354" description="In isoform 2." evidence="19">
    <location>
        <begin position="100"/>
        <end position="356"/>
    </location>
</feature>
<feature type="sequence variant" id="VAR_084362" description="In HMNR8." evidence="11">
    <original>L</original>
    <variation>F</variation>
    <location>
        <position position="10"/>
    </location>
</feature>
<feature type="sequence variant" id="VAR_084363" description="In HMNR8." evidence="11">
    <location>
        <begin position="100"/>
        <end position="357"/>
    </location>
</feature>
<feature type="sequence variant" id="VAR_084364" description="In HMNR8; results in protein aggregation." evidence="11 13">
    <original>R</original>
    <variation>P</variation>
    <location>
        <position position="110"/>
    </location>
</feature>
<feature type="sequence variant" id="VAR_084365" description="In HMNR8; results in protein aggregation." evidence="13">
    <original>H</original>
    <variation>R</variation>
    <location>
        <position position="135"/>
    </location>
</feature>
<feature type="sequence variant" id="VAR_084366" description="In HMNR8; uncertain significance; results in protein aggregation; dbSNP:rs145813597." evidence="11 13">
    <original>A</original>
    <variation>D</variation>
    <location>
        <position position="153"/>
    </location>
</feature>
<feature type="sequence variant" id="VAR_084367" description="In HMNR8." evidence="12">
    <location>
        <begin position="209"/>
        <end position="357"/>
    </location>
</feature>
<feature type="sequence variant" id="VAR_000430" description="In dbSNP:rs1042079." evidence="15">
    <original>Q</original>
    <variation>L</variation>
    <location>
        <position position="239"/>
    </location>
</feature>
<feature type="sequence variant" id="VAR_060351" description="In dbSNP:rs930337." evidence="5 6 15 16 17">
    <original>N</original>
    <variation>T</variation>
    <location>
        <position position="269"/>
    </location>
</feature>
<feature type="sequence variant" id="VAR_084368" description="In HMNR8." evidence="11">
    <location>
        <begin position="299"/>
        <end position="357"/>
    </location>
</feature>
<feature type="sequence variant" id="VAR_084369" description="In HMNR8; uncertain significance; dbSNP:rs149975952." evidence="11">
    <original>V</original>
    <variation>I</variation>
    <location>
        <position position="322"/>
    </location>
</feature>
<feature type="sequence conflict" description="In Ref. 7; AA sequence." evidence="24" ref="7">
    <location>
        <position position="5"/>
    </location>
</feature>
<feature type="sequence conflict" description="In Ref. 7; AA sequence." evidence="24" ref="7">
    <original>N</original>
    <variation>D</variation>
    <location>
        <position position="59"/>
    </location>
</feature>
<feature type="sequence conflict" description="In Ref. 7; AA sequence." evidence="24" ref="7">
    <original>M</original>
    <variation>E</variation>
    <location>
        <position position="186"/>
    </location>
</feature>
<feature type="sequence conflict" description="In Ref. 7; AA sequence." evidence="24" ref="7">
    <original>T</original>
    <variation>S</variation>
    <location>
        <position position="281"/>
    </location>
</feature>
<feature type="sequence conflict" description="In Ref. 7; AA sequence." evidence="24" ref="7">
    <original>I</original>
    <variation>T</variation>
    <location>
        <position position="289"/>
    </location>
</feature>
<feature type="strand" evidence="33">
    <location>
        <begin position="10"/>
        <end position="16"/>
    </location>
</feature>
<feature type="strand" evidence="33">
    <location>
        <begin position="19"/>
        <end position="24"/>
    </location>
</feature>
<feature type="strand" evidence="33">
    <location>
        <begin position="34"/>
        <end position="44"/>
    </location>
</feature>
<feature type="helix" evidence="33">
    <location>
        <begin position="46"/>
        <end position="54"/>
    </location>
</feature>
<feature type="strand" evidence="33">
    <location>
        <begin position="55"/>
        <end position="57"/>
    </location>
</feature>
<feature type="strand" evidence="33">
    <location>
        <begin position="71"/>
        <end position="79"/>
    </location>
</feature>
<feature type="strand" evidence="33">
    <location>
        <begin position="91"/>
        <end position="94"/>
    </location>
</feature>
<feature type="strand" evidence="33">
    <location>
        <begin position="96"/>
        <end position="98"/>
    </location>
</feature>
<feature type="helix" evidence="33">
    <location>
        <begin position="104"/>
        <end position="107"/>
    </location>
</feature>
<feature type="helix" evidence="33">
    <location>
        <begin position="111"/>
        <end position="113"/>
    </location>
</feature>
<feature type="strand" evidence="33">
    <location>
        <begin position="130"/>
        <end position="136"/>
    </location>
</feature>
<feature type="helix" evidence="33">
    <location>
        <begin position="137"/>
        <end position="139"/>
    </location>
</feature>
<feature type="strand" evidence="33">
    <location>
        <begin position="140"/>
        <end position="142"/>
    </location>
</feature>
<feature type="helix" evidence="33">
    <location>
        <begin position="149"/>
        <end position="168"/>
    </location>
</feature>
<feature type="strand" evidence="33">
    <location>
        <begin position="175"/>
        <end position="179"/>
    </location>
</feature>
<feature type="helix" evidence="33">
    <location>
        <begin position="183"/>
        <end position="194"/>
    </location>
</feature>
<feature type="strand" evidence="33">
    <location>
        <begin position="198"/>
        <end position="205"/>
    </location>
</feature>
<feature type="helix" evidence="33">
    <location>
        <begin position="207"/>
        <end position="215"/>
    </location>
</feature>
<feature type="strand" evidence="33">
    <location>
        <begin position="219"/>
        <end position="223"/>
    </location>
</feature>
<feature type="helix" evidence="33">
    <location>
        <begin position="229"/>
        <end position="240"/>
    </location>
</feature>
<feature type="strand" evidence="33">
    <location>
        <begin position="245"/>
        <end position="249"/>
    </location>
</feature>
<feature type="helix" evidence="33">
    <location>
        <begin position="254"/>
        <end position="263"/>
    </location>
</feature>
<feature type="strand" evidence="33">
    <location>
        <begin position="269"/>
        <end position="272"/>
    </location>
</feature>
<feature type="helix" evidence="33">
    <location>
        <begin position="284"/>
        <end position="289"/>
    </location>
</feature>
<feature type="strand" evidence="33">
    <location>
        <begin position="293"/>
        <end position="296"/>
    </location>
</feature>
<feature type="helix" evidence="33">
    <location>
        <begin position="304"/>
        <end position="312"/>
    </location>
</feature>
<feature type="helix" evidence="33">
    <location>
        <begin position="319"/>
        <end position="321"/>
    </location>
</feature>
<feature type="strand" evidence="33">
    <location>
        <begin position="322"/>
        <end position="327"/>
    </location>
</feature>
<feature type="helix" evidence="33">
    <location>
        <begin position="328"/>
        <end position="330"/>
    </location>
</feature>
<feature type="helix" evidence="33">
    <location>
        <begin position="331"/>
        <end position="339"/>
    </location>
</feature>
<feature type="strand" evidence="33">
    <location>
        <begin position="344"/>
        <end position="349"/>
    </location>
</feature>
<accession>Q00796</accession>
<accession>B2R655</accession>
<accession>B7Z3A6</accession>
<accession>J3JZZ5</accession>
<accession>Q16682</accession>
<accession>Q9UMD6</accession>
<name>DHSO_HUMAN</name>
<keyword id="KW-0002">3D-structure</keyword>
<keyword id="KW-0007">Acetylation</keyword>
<keyword id="KW-0025">Alternative splicing</keyword>
<keyword id="KW-0966">Cell projection</keyword>
<keyword id="KW-0969">Cilium</keyword>
<keyword id="KW-0903">Direct protein sequencing</keyword>
<keyword id="KW-0225">Disease variant</keyword>
<keyword id="KW-0282">Flagellum</keyword>
<keyword id="KW-0472">Membrane</keyword>
<keyword id="KW-0479">Metal-binding</keyword>
<keyword id="KW-0496">Mitochondrion</keyword>
<keyword id="KW-0520">NAD</keyword>
<keyword id="KW-0622">Neuropathy</keyword>
<keyword id="KW-0560">Oxidoreductase</keyword>
<keyword id="KW-0597">Phosphoprotein</keyword>
<keyword id="KW-1267">Proteomics identification</keyword>
<keyword id="KW-1185">Reference proteome</keyword>
<keyword id="KW-0862">Zinc</keyword>
<sequence>MAAAAKPNNLSLVVHGPGDLRLENYPIPEPGPNEVLLRMHSVGICGSDVHYWEYGRIGNFIVKKPMVLGHEASGTVEKVGSSVKHLKPGDRVAIEPGAPRENDEFCKMGRYNLSPSIFFCATPPDDGNLCRFYKHNAAFCYKLPDNVTFEEGALIEPLSVGIHACRRGGVTLGHKVLVCGAGPIGMVTLLVAKAMGAAQVVVTDLSATRLSKAKEIGADLVLQISKESPQEIARKVEGQLGCKPEVTIECTGAEASIQAGIYATRSGGNLVLVGLGSEMTTVPLLHAAIREVDIKGVFRYCNTWPVAISMLASKSVNVKPLVTHRFPLEKALEAFETFKKGLGLKIMLKCDPSDQNP</sequence>
<comment type="function">
    <text evidence="7 14 20 21 25">Polyol dehydrogenase that catalyzes the reversible NAD(+)-dependent oxidation of various sugar alcohols. Is mostly active with D-sorbitol (D-glucitol), L-threitol, xylitol and ribitol as substrates, leading to the C2-oxidized products D-fructose, L-erythrulose, D-xylulose, and D-ribulose, respectively (PubMed:3365415). Is a key enzyme in the polyol pathway that interconverts glucose and fructose via sorbitol, which constitutes an important alternate route for glucose metabolism. The polyol pathway is believed to be involved in the etiology of diabetic complications, such as diabetic neuropathy and retinopathy, induced by hyperglycemia (PubMed:12962626, PubMed:25105142, PubMed:29966615). May play a role in sperm motility by using sorbitol as an alternative energy source for sperm motility (PubMed:16278369). May have a more general function in the metabolism of secondary alcohols since it also catalyzes the stereospecific oxidation of (2R,3R)-2,3-butanediol. To a lesser extent, can also oxidize L-arabinitol, galactitol and D-mannitol and glycerol in vitro. Oxidizes neither ethanol nor other primary alcohols. Cannot use NADP(+) as the electron acceptor (PubMed:3365415).</text>
</comment>
<comment type="catalytic activity">
    <reaction evidence="4 14">
        <text>keto-D-fructose + NADH + H(+) = D-sorbitol + NAD(+)</text>
        <dbReference type="Rhea" id="RHEA:33031"/>
        <dbReference type="ChEBI" id="CHEBI:15378"/>
        <dbReference type="ChEBI" id="CHEBI:17924"/>
        <dbReference type="ChEBI" id="CHEBI:48095"/>
        <dbReference type="ChEBI" id="CHEBI:57540"/>
        <dbReference type="ChEBI" id="CHEBI:57945"/>
    </reaction>
    <physiologicalReaction direction="right-to-left" evidence="25">
        <dbReference type="Rhea" id="RHEA:33033"/>
    </physiologicalReaction>
</comment>
<comment type="catalytic activity">
    <reaction evidence="14">
        <text>L-threitol + NAD(+) = L-erythrulose + NADH + H(+)</text>
        <dbReference type="Rhea" id="RHEA:48760"/>
        <dbReference type="ChEBI" id="CHEBI:15378"/>
        <dbReference type="ChEBI" id="CHEBI:27913"/>
        <dbReference type="ChEBI" id="CHEBI:42090"/>
        <dbReference type="ChEBI" id="CHEBI:57540"/>
        <dbReference type="ChEBI" id="CHEBI:57945"/>
    </reaction>
</comment>
<comment type="catalytic activity">
    <reaction evidence="14">
        <text>xylitol + NAD(+) = D-xylulose + NADH + H(+)</text>
        <dbReference type="Rhea" id="RHEA:20433"/>
        <dbReference type="ChEBI" id="CHEBI:15378"/>
        <dbReference type="ChEBI" id="CHEBI:17140"/>
        <dbReference type="ChEBI" id="CHEBI:17151"/>
        <dbReference type="ChEBI" id="CHEBI:57540"/>
        <dbReference type="ChEBI" id="CHEBI:57945"/>
        <dbReference type="EC" id="1.1.1.9"/>
    </reaction>
</comment>
<comment type="catalytic activity">
    <reaction evidence="14">
        <text>ribitol + NAD(+) = D-ribulose + NADH + H(+)</text>
        <dbReference type="Rhea" id="RHEA:20053"/>
        <dbReference type="ChEBI" id="CHEBI:15378"/>
        <dbReference type="ChEBI" id="CHEBI:15963"/>
        <dbReference type="ChEBI" id="CHEBI:17173"/>
        <dbReference type="ChEBI" id="CHEBI:57540"/>
        <dbReference type="ChEBI" id="CHEBI:57945"/>
        <dbReference type="EC" id="1.1.1.56"/>
    </reaction>
</comment>
<comment type="catalytic activity">
    <reaction evidence="14">
        <text>(R,R)-butane-2,3-diol + NAD(+) = (R)-acetoin + NADH + H(+)</text>
        <dbReference type="Rhea" id="RHEA:24340"/>
        <dbReference type="ChEBI" id="CHEBI:15378"/>
        <dbReference type="ChEBI" id="CHEBI:15686"/>
        <dbReference type="ChEBI" id="CHEBI:16982"/>
        <dbReference type="ChEBI" id="CHEBI:57540"/>
        <dbReference type="ChEBI" id="CHEBI:57945"/>
        <dbReference type="EC" id="1.1.1.4"/>
    </reaction>
</comment>
<comment type="catalytic activity">
    <reaction evidence="1">
        <text>L-iditol + NAD(+) = keto-L-sorbose + NADH + H(+)</text>
        <dbReference type="Rhea" id="RHEA:10160"/>
        <dbReference type="ChEBI" id="CHEBI:13172"/>
        <dbReference type="ChEBI" id="CHEBI:15378"/>
        <dbReference type="ChEBI" id="CHEBI:18202"/>
        <dbReference type="ChEBI" id="CHEBI:57540"/>
        <dbReference type="ChEBI" id="CHEBI:57945"/>
        <dbReference type="EC" id="1.1.1.14"/>
    </reaction>
</comment>
<comment type="cofactor">
    <cofactor evidence="4 14">
        <name>Zn(2+)</name>
        <dbReference type="ChEBI" id="CHEBI:29105"/>
    </cofactor>
    <text evidence="4 14">Binds 1 zinc ion per subunit.</text>
</comment>
<comment type="activity regulation">
    <text evidence="4 14">Inhibited by CP-166,572, an inhibitor that is competitive with fructose (PubMed:12962626). Also competitively inhibited by phenanthroline and 4-methylpyrazole in vitro (PubMed:3365415).</text>
</comment>
<comment type="biophysicochemical properties">
    <kinetics>
        <KM evidence="4">1.5 mM for sorbitol</KM>
        <KM evidence="4">225 uM for NAD(+)</KM>
        <KM evidence="4">210 uM for NADH</KM>
        <KM evidence="14">0.62 mM for D-sorbitol (at pH 7.1)</KM>
        <KM evidence="14">0.67 mM for D-sorbitol (at pH 10.0)</KM>
        <KM evidence="14">0.22 mM for xylitol (at pH 10.0)</KM>
        <KM evidence="14">2.7 mM for L-threitol (at pH 10.0)</KM>
        <KM evidence="14">9.5 mM for (2R,3R)-2,3-butanediol (at pH 10.0)</KM>
        <KM evidence="14">0.14 M for D-fructose (at pH 7.1)</KM>
        <text evidence="14">kcat is 1.7 sec(-1) for the oxidation of D-sorbitol at pH 7.1, and 5.2 sec(-1) at pH 10.0. kcat is 5.9 sec(-1) the oxidation of xylitol as substrate at pH 10.0. kcat is 5.3 sec(-1) the oxidation of L-threitol as substrate at pH 10.0. kcat is 4.2 sec(-1) the oxidation of (2R,3R)-2,3-butanediol as substrate at pH 10.0. kcat is 45 sec(-1) for the reduction of D-fructose at pH 7.1.</text>
    </kinetics>
</comment>
<comment type="subunit">
    <text evidence="4 14">Homotetramer.</text>
</comment>
<comment type="interaction">
    <interactant intactId="EBI-750068">
        <id>Q00796</id>
    </interactant>
    <interactant intactId="EBI-750068">
        <id>Q00796</id>
        <label>SORD</label>
    </interactant>
    <organismsDiffer>false</organismsDiffer>
    <experiments>6</experiments>
</comment>
<comment type="subcellular location">
    <subcellularLocation>
        <location evidence="2">Mitochondrion membrane</location>
        <topology evidence="2">Peripheral membrane protein</topology>
    </subcellularLocation>
    <subcellularLocation>
        <location evidence="2">Cell projection</location>
        <location evidence="2">Cilium</location>
        <location evidence="2">Flagellum</location>
    </subcellularLocation>
    <text evidence="2">Associated with mitochondria of the midpiece and near the plasma membrane in the principal piece of the flagellum. Also found in the epididymosome, secreted by the epididymal epithelium and that transfers proteins from the epididymal fluid to the sperm surface.</text>
</comment>
<comment type="alternative products">
    <event type="alternative splicing"/>
    <isoform>
        <id>Q00796-1</id>
        <name>1</name>
        <sequence type="displayed"/>
    </isoform>
    <isoform>
        <id>Q00796-2</id>
        <name>2</name>
        <sequence type="described" ref="VSP_056353 VSP_056354"/>
    </isoform>
</comment>
<comment type="tissue specificity">
    <text evidence="7 8 9 14">Expressed in liver (PubMed:3365415). Expressed in kidney and epithelial cells of both benign and malignant prostate tissue. Expressed in epididymis (at protein level).</text>
</comment>
<comment type="induction">
    <text evidence="9">Up-regulated by androgens and down-regulated by castration.</text>
</comment>
<comment type="disease" evidence="11 12 13">
    <disease id="DI-05855">
        <name>Neuronopathy, distal hereditary motor, autosomal recessive 8</name>
        <acronym>HMNR8</acronym>
        <description>An autosomal recessive disorder characterized by motor axonal neuropathy, slowly progressive distal muscle weakness mainly affecting the lower limbs, difficulty walking, and increased serum sorbitol. Additional variable features are distal sensory impairment, upper limb tremor, scoliosis, and mild hearing loss.</description>
        <dbReference type="MIM" id="618912"/>
    </disease>
    <text>The disease is caused by variants affecting the gene represented in this entry.</text>
</comment>
<comment type="similarity">
    <text evidence="24">Belongs to the zinc-containing alcohol dehydrogenase family.</text>
</comment>
<reference key="1">
    <citation type="journal article" date="1994" name="Genomics">
        <title>The human sorbitol dehydrogenase gene: cDNA cloning, sequence determination, and mapping by fluorescence in situ hybridization.</title>
        <authorList>
            <person name="Lee F.K."/>
            <person name="Cheung M.C."/>
            <person name="Chung S."/>
        </authorList>
    </citation>
    <scope>NUCLEOTIDE SEQUENCE [MRNA] (ISOFORM 1)</scope>
    <scope>VARIANT THR-269</scope>
    <source>
        <tissue>Liver</tissue>
    </source>
</reference>
<reference key="2">
    <citation type="journal article" date="1995" name="Genomics">
        <title>Structural organization of the human sorbitol dehydrogenase gene (SORD).</title>
        <authorList>
            <person name="Iwata T."/>
            <person name="Popescu N.C."/>
            <person name="Zimonjic D.B."/>
            <person name="Karlsson C."/>
            <person name="Hoeoeg J.-O."/>
            <person name="Vaca G."/>
            <person name="Rodriguez I.R."/>
            <person name="Carper D."/>
        </authorList>
    </citation>
    <scope>NUCLEOTIDE SEQUENCE [GENOMIC DNA / MRNA] (ISOFORM 1)</scope>
    <scope>VARIANTS LEU-239 AND THR-269</scope>
</reference>
<reference key="3">
    <citation type="journal article" date="1997" name="Eur. J. Biochem.">
        <title>Identification and characterisation of a sequence related to human sorbitol dehydrogenase.</title>
        <authorList>
            <person name="Carr I.M."/>
            <person name="Markham A.F."/>
            <person name="Coletta P.L."/>
        </authorList>
    </citation>
    <scope>NUCLEOTIDE SEQUENCE [GENOMIC DNA]</scope>
    <scope>VARIANT THR-269</scope>
</reference>
<reference key="4">
    <citation type="journal article" date="2004" name="Nat. Genet.">
        <title>Complete sequencing and characterization of 21,243 full-length human cDNAs.</title>
        <authorList>
            <person name="Ota T."/>
            <person name="Suzuki Y."/>
            <person name="Nishikawa T."/>
            <person name="Otsuki T."/>
            <person name="Sugiyama T."/>
            <person name="Irie R."/>
            <person name="Wakamatsu A."/>
            <person name="Hayashi K."/>
            <person name="Sato H."/>
            <person name="Nagai K."/>
            <person name="Kimura K."/>
            <person name="Makita H."/>
            <person name="Sekine M."/>
            <person name="Obayashi M."/>
            <person name="Nishi T."/>
            <person name="Shibahara T."/>
            <person name="Tanaka T."/>
            <person name="Ishii S."/>
            <person name="Yamamoto J."/>
            <person name="Saito K."/>
            <person name="Kawai Y."/>
            <person name="Isono Y."/>
            <person name="Nakamura Y."/>
            <person name="Nagahari K."/>
            <person name="Murakami K."/>
            <person name="Yasuda T."/>
            <person name="Iwayanagi T."/>
            <person name="Wagatsuma M."/>
            <person name="Shiratori A."/>
            <person name="Sudo H."/>
            <person name="Hosoiri T."/>
            <person name="Kaku Y."/>
            <person name="Kodaira H."/>
            <person name="Kondo H."/>
            <person name="Sugawara M."/>
            <person name="Takahashi M."/>
            <person name="Kanda K."/>
            <person name="Yokoi T."/>
            <person name="Furuya T."/>
            <person name="Kikkawa E."/>
            <person name="Omura Y."/>
            <person name="Abe K."/>
            <person name="Kamihara K."/>
            <person name="Katsuta N."/>
            <person name="Sato K."/>
            <person name="Tanikawa M."/>
            <person name="Yamazaki M."/>
            <person name="Ninomiya K."/>
            <person name="Ishibashi T."/>
            <person name="Yamashita H."/>
            <person name="Murakawa K."/>
            <person name="Fujimori K."/>
            <person name="Tanai H."/>
            <person name="Kimata M."/>
            <person name="Watanabe M."/>
            <person name="Hiraoka S."/>
            <person name="Chiba Y."/>
            <person name="Ishida S."/>
            <person name="Ono Y."/>
            <person name="Takiguchi S."/>
            <person name="Watanabe S."/>
            <person name="Yosida M."/>
            <person name="Hotuta T."/>
            <person name="Kusano J."/>
            <person name="Kanehori K."/>
            <person name="Takahashi-Fujii A."/>
            <person name="Hara H."/>
            <person name="Tanase T.-O."/>
            <person name="Nomura Y."/>
            <person name="Togiya S."/>
            <person name="Komai F."/>
            <person name="Hara R."/>
            <person name="Takeuchi K."/>
            <person name="Arita M."/>
            <person name="Imose N."/>
            <person name="Musashino K."/>
            <person name="Yuuki H."/>
            <person name="Oshima A."/>
            <person name="Sasaki N."/>
            <person name="Aotsuka S."/>
            <person name="Yoshikawa Y."/>
            <person name="Matsunawa H."/>
            <person name="Ichihara T."/>
            <person name="Shiohata N."/>
            <person name="Sano S."/>
            <person name="Moriya S."/>
            <person name="Momiyama H."/>
            <person name="Satoh N."/>
            <person name="Takami S."/>
            <person name="Terashima Y."/>
            <person name="Suzuki O."/>
            <person name="Nakagawa S."/>
            <person name="Senoh A."/>
            <person name="Mizoguchi H."/>
            <person name="Goto Y."/>
            <person name="Shimizu F."/>
            <person name="Wakebe H."/>
            <person name="Hishigaki H."/>
            <person name="Watanabe T."/>
            <person name="Sugiyama A."/>
            <person name="Takemoto M."/>
            <person name="Kawakami B."/>
            <person name="Yamazaki M."/>
            <person name="Watanabe K."/>
            <person name="Kumagai A."/>
            <person name="Itakura S."/>
            <person name="Fukuzumi Y."/>
            <person name="Fujimori Y."/>
            <person name="Komiyama M."/>
            <person name="Tashiro H."/>
            <person name="Tanigami A."/>
            <person name="Fujiwara T."/>
            <person name="Ono T."/>
            <person name="Yamada K."/>
            <person name="Fujii Y."/>
            <person name="Ozaki K."/>
            <person name="Hirao M."/>
            <person name="Ohmori Y."/>
            <person name="Kawabata A."/>
            <person name="Hikiji T."/>
            <person name="Kobatake N."/>
            <person name="Inagaki H."/>
            <person name="Ikema Y."/>
            <person name="Okamoto S."/>
            <person name="Okitani R."/>
            <person name="Kawakami T."/>
            <person name="Noguchi S."/>
            <person name="Itoh T."/>
            <person name="Shigeta K."/>
            <person name="Senba T."/>
            <person name="Matsumura K."/>
            <person name="Nakajima Y."/>
            <person name="Mizuno T."/>
            <person name="Morinaga M."/>
            <person name="Sasaki M."/>
            <person name="Togashi T."/>
            <person name="Oyama M."/>
            <person name="Hata H."/>
            <person name="Watanabe M."/>
            <person name="Komatsu T."/>
            <person name="Mizushima-Sugano J."/>
            <person name="Satoh T."/>
            <person name="Shirai Y."/>
            <person name="Takahashi Y."/>
            <person name="Nakagawa K."/>
            <person name="Okumura K."/>
            <person name="Nagase T."/>
            <person name="Nomura N."/>
            <person name="Kikuchi H."/>
            <person name="Masuho Y."/>
            <person name="Yamashita R."/>
            <person name="Nakai K."/>
            <person name="Yada T."/>
            <person name="Nakamura Y."/>
            <person name="Ohara O."/>
            <person name="Isogai T."/>
            <person name="Sugano S."/>
        </authorList>
    </citation>
    <scope>NUCLEOTIDE SEQUENCE [LARGE SCALE MRNA] (ISOFORMS 1 AND 2)</scope>
    <scope>VARIANT THR-269</scope>
    <source>
        <tissue>Brain</tissue>
        <tissue>Hippocampus</tissue>
    </source>
</reference>
<reference key="5">
    <citation type="journal article" date="2006" name="Nature">
        <title>Analysis of the DNA sequence and duplication history of human chromosome 15.</title>
        <authorList>
            <person name="Zody M.C."/>
            <person name="Garber M."/>
            <person name="Sharpe T."/>
            <person name="Young S.K."/>
            <person name="Rowen L."/>
            <person name="O'Neill K."/>
            <person name="Whittaker C.A."/>
            <person name="Kamal M."/>
            <person name="Chang J.L."/>
            <person name="Cuomo C.A."/>
            <person name="Dewar K."/>
            <person name="FitzGerald M.G."/>
            <person name="Kodira C.D."/>
            <person name="Madan A."/>
            <person name="Qin S."/>
            <person name="Yang X."/>
            <person name="Abbasi N."/>
            <person name="Abouelleil A."/>
            <person name="Arachchi H.M."/>
            <person name="Baradarani L."/>
            <person name="Birditt B."/>
            <person name="Bloom S."/>
            <person name="Bloom T."/>
            <person name="Borowsky M.L."/>
            <person name="Burke J."/>
            <person name="Butler J."/>
            <person name="Cook A."/>
            <person name="DeArellano K."/>
            <person name="DeCaprio D."/>
            <person name="Dorris L. III"/>
            <person name="Dors M."/>
            <person name="Eichler E.E."/>
            <person name="Engels R."/>
            <person name="Fahey J."/>
            <person name="Fleetwood P."/>
            <person name="Friedman C."/>
            <person name="Gearin G."/>
            <person name="Hall J.L."/>
            <person name="Hensley G."/>
            <person name="Johnson E."/>
            <person name="Jones C."/>
            <person name="Kamat A."/>
            <person name="Kaur A."/>
            <person name="Locke D.P."/>
            <person name="Madan A."/>
            <person name="Munson G."/>
            <person name="Jaffe D.B."/>
            <person name="Lui A."/>
            <person name="Macdonald P."/>
            <person name="Mauceli E."/>
            <person name="Naylor J.W."/>
            <person name="Nesbitt R."/>
            <person name="Nicol R."/>
            <person name="O'Leary S.B."/>
            <person name="Ratcliffe A."/>
            <person name="Rounsley S."/>
            <person name="She X."/>
            <person name="Sneddon K.M.B."/>
            <person name="Stewart S."/>
            <person name="Sougnez C."/>
            <person name="Stone S.M."/>
            <person name="Topham K."/>
            <person name="Vincent D."/>
            <person name="Wang S."/>
            <person name="Zimmer A.R."/>
            <person name="Birren B.W."/>
            <person name="Hood L."/>
            <person name="Lander E.S."/>
            <person name="Nusbaum C."/>
        </authorList>
    </citation>
    <scope>NUCLEOTIDE SEQUENCE [LARGE SCALE GENOMIC DNA]</scope>
</reference>
<reference key="6">
    <citation type="journal article" date="2004" name="Genome Res.">
        <title>The status, quality, and expansion of the NIH full-length cDNA project: the Mammalian Gene Collection (MGC).</title>
        <authorList>
            <consortium name="The MGC Project Team"/>
        </authorList>
    </citation>
    <scope>NUCLEOTIDE SEQUENCE [LARGE SCALE MRNA] (ISOFORM 1)</scope>
    <scope>VARIANT THR-269</scope>
    <source>
        <tissue>Brain</tissue>
        <tissue>Lymph</tissue>
    </source>
</reference>
<reference key="7">
    <citation type="journal article" date="1989" name="Eur. J. Biochem.">
        <title>Variability within mammalian sorbitol dehydrogenases. The primary structure of the human liver enzyme.</title>
        <authorList>
            <person name="Karlsson C."/>
            <person name="Maret W."/>
            <person name="Auld D.S."/>
            <person name="Hoeoeg J.-O."/>
            <person name="Joernvall H."/>
        </authorList>
    </citation>
    <scope>PROTEIN SEQUENCE OF 2-357</scope>
    <source>
        <tissue>Liver</tissue>
    </source>
</reference>
<reference key="8">
    <citation type="journal article" date="2003" name="Nat. Biotechnol.">
        <title>Exploring proteomes and analyzing protein processing by mass spectrometric identification of sorted N-terminal peptides.</title>
        <authorList>
            <person name="Gevaert K."/>
            <person name="Goethals M."/>
            <person name="Martens L."/>
            <person name="Van Damme J."/>
            <person name="Staes A."/>
            <person name="Thomas G.R."/>
            <person name="Vandekerckhove J."/>
        </authorList>
    </citation>
    <scope>PROTEIN SEQUENCE OF 2-21</scope>
    <source>
        <tissue>Platelet</tissue>
    </source>
</reference>
<reference key="9">
    <citation type="journal article" date="1988" name="Biochemistry">
        <title>Purification and characterization of human liver sorbitol dehydrogenase.</title>
        <authorList>
            <person name="Maret W."/>
            <person name="Auld D.S."/>
        </authorList>
    </citation>
    <scope>FUNCTION</scope>
    <scope>CATALYTIC ACTIVITY</scope>
    <scope>SUBSTRATE SPECIFICITY</scope>
    <scope>BIOPHYSICOCHEMICAL PROPERTIES</scope>
    <scope>COFACTOR</scope>
    <scope>ACTIVITY REGULATION</scope>
    <scope>SUBUNIT</scope>
    <scope>TISSUE SPECIFICITY</scope>
</reference>
<reference key="10">
    <citation type="journal article" date="2006" name="J. Androl.">
        <title>Polyol pathway in human epididymis and semen.</title>
        <authorList>
            <person name="Frenette G."/>
            <person name="Thabet M."/>
            <person name="Sullivan R."/>
        </authorList>
    </citation>
    <scope>FUNCTION</scope>
    <scope>TISSUE SPECIFICITY</scope>
</reference>
<reference key="11">
    <citation type="journal article" date="2009" name="Anal. Chem.">
        <title>Lys-N and trypsin cover complementary parts of the phosphoproteome in a refined SCX-based approach.</title>
        <authorList>
            <person name="Gauci S."/>
            <person name="Helbig A.O."/>
            <person name="Slijper M."/>
            <person name="Krijgsveld J."/>
            <person name="Heck A.J."/>
            <person name="Mohammed S."/>
        </authorList>
    </citation>
    <scope>ACETYLATION [LARGE SCALE ANALYSIS] AT ALA-2</scope>
    <scope>CLEAVAGE OF INITIATOR METHIONINE [LARGE SCALE ANALYSIS]</scope>
    <scope>IDENTIFICATION BY MASS SPECTROMETRY [LARGE SCALE ANALYSIS]</scope>
</reference>
<reference key="12">
    <citation type="journal article" date="2010" name="Oncol. Rep.">
        <title>Sorbitol dehydrogenase expression is regulated by androgens in the human prostate.</title>
        <authorList>
            <person name="Szabo Z."/>
            <person name="Hamalainen J."/>
            <person name="Loikkanen I."/>
            <person name="Moilanen A.M."/>
            <person name="Hirvikoski P."/>
            <person name="Vaisanen T."/>
            <person name="Paavonen T.K."/>
            <person name="Vaarala M.H."/>
        </authorList>
    </citation>
    <scope>TISSUE SPECIFICITY</scope>
    <scope>INDUCTION</scope>
</reference>
<reference key="13">
    <citation type="journal article" date="2009" name="J. Biol. Chem.">
        <title>ZAC1 is up-regulated by hypertonicity and decreases sorbitol dehydrogenase expression, allowing accumulation of sorbitol in kidney cells.</title>
        <authorList>
            <person name="Lanaspa M.A."/>
            <person name="Andres-Hernando A."/>
            <person name="Rivard C.J."/>
            <person name="Dai Y."/>
            <person name="Li N."/>
            <person name="Berl T."/>
        </authorList>
    </citation>
    <scope>TISSUE SPECIFICITY</scope>
</reference>
<reference key="14">
    <citation type="journal article" date="2011" name="BMC Syst. Biol.">
        <title>Initial characterization of the human central proteome.</title>
        <authorList>
            <person name="Burkard T.R."/>
            <person name="Planyavsky M."/>
            <person name="Kaupe I."/>
            <person name="Breitwieser F.P."/>
            <person name="Buerckstuemmer T."/>
            <person name="Bennett K.L."/>
            <person name="Superti-Furga G."/>
            <person name="Colinge J."/>
        </authorList>
    </citation>
    <scope>IDENTIFICATION BY MASS SPECTROMETRY [LARGE SCALE ANALYSIS]</scope>
</reference>
<reference key="15">
    <citation type="journal article" date="2014" name="Biomed. Res. Int.">
        <title>Molecular mechanisms of diabetic retinopathy, general preventive strategies, and novel therapeutic targets.</title>
        <authorList>
            <person name="Safi S.Z."/>
            <person name="Qvist R."/>
            <person name="Kumar S."/>
            <person name="Batumalaie K."/>
            <person name="Ismail I.S."/>
        </authorList>
    </citation>
    <scope>REVIEW</scope>
    <scope>ROLE OF THE POLYOL PATHWAY IN DIABETIC RETINOPATHY</scope>
</reference>
<reference key="16">
    <citation type="journal article" date="2014" name="J. Proteomics">
        <title>An enzyme assisted RP-RPLC approach for in-depth analysis of human liver phosphoproteome.</title>
        <authorList>
            <person name="Bian Y."/>
            <person name="Song C."/>
            <person name="Cheng K."/>
            <person name="Dong M."/>
            <person name="Wang F."/>
            <person name="Huang J."/>
            <person name="Sun D."/>
            <person name="Wang L."/>
            <person name="Ye M."/>
            <person name="Zou H."/>
        </authorList>
    </citation>
    <scope>PHOSPHORYLATION [LARGE SCALE ANALYSIS] AT SER-211 AND SER-225</scope>
    <scope>IDENTIFICATION BY MASS SPECTROMETRY [LARGE SCALE ANALYSIS]</scope>
    <source>
        <tissue>Liver</tissue>
    </source>
</reference>
<reference key="17">
    <citation type="journal article" date="2015" name="Proteomics">
        <title>N-terminome analysis of the human mitochondrial proteome.</title>
        <authorList>
            <person name="Vaca Jacome A.S."/>
            <person name="Rabilloud T."/>
            <person name="Schaeffer-Reiss C."/>
            <person name="Rompais M."/>
            <person name="Ayoub D."/>
            <person name="Lane L."/>
            <person name="Bairoch A."/>
            <person name="Van Dorsselaer A."/>
            <person name="Carapito C."/>
        </authorList>
    </citation>
    <scope>ACETYLATION [LARGE SCALE ANALYSIS] AT ALA-2</scope>
    <scope>CLEAVAGE OF INITIATOR METHIONINE [LARGE SCALE ANALYSIS]</scope>
    <scope>IDENTIFICATION BY MASS SPECTROMETRY [LARGE SCALE ANALYSIS]</scope>
</reference>
<reference key="18">
    <citation type="journal article" date="2018" name="Eur. J. Pharmacol.">
        <title>Molecular mechanism of diabetic neuropathy and its pharmacotherapeutic targets.</title>
        <authorList>
            <person name="Dewanjee S."/>
            <person name="Das S."/>
            <person name="Das A.K."/>
            <person name="Bhattacharjee N."/>
            <person name="Dihingia A."/>
            <person name="Dua T.K."/>
            <person name="Kalita J."/>
            <person name="Manna P."/>
        </authorList>
    </citation>
    <scope>REVIEW</scope>
    <scope>ROLE OF THE POLYOL PATHWAY IN DIABETIC NEUROPATHY</scope>
</reference>
<reference evidence="27 28 29" key="19">
    <citation type="journal article" date="2003" name="Structure">
        <title>X-ray crystallographic and kinetic studies of human sorbitol dehydrogenase.</title>
        <authorList>
            <person name="Pauly T.A."/>
            <person name="Ekstrom J.L."/>
            <person name="Beebe D.A."/>
            <person name="Chrunyk B."/>
            <person name="Cunningham D."/>
            <person name="Griffor M."/>
            <person name="Kamath A."/>
            <person name="Lee S.E."/>
            <person name="Madura R."/>
            <person name="Mcguire D."/>
            <person name="Subashi T."/>
            <person name="Wasilko D."/>
            <person name="Watts P."/>
            <person name="Mylari B.L."/>
            <person name="Oates P.J."/>
            <person name="Adams P.D."/>
            <person name="Rath V.L."/>
        </authorList>
    </citation>
    <scope>X-RAY CRYSTALLOGRAPHY (2.0 ANGSTROMS) IN COMPLEXES WITH ZINC; NAD AND INHIBITOR CP-166,572</scope>
    <scope>FUNCTION</scope>
    <scope>CATALYTIC ACTIVITY</scope>
    <scope>BIOPHYSICOCHEMICAL PROPERTIES</scope>
    <scope>ACTIVITY REGULATION</scope>
    <scope>SUBUNIT</scope>
    <scope>REACTION MECHANISM</scope>
</reference>
<reference key="20">
    <citation type="journal article" date="2020" name="Nat. Genet.">
        <title>Biallelic mutations in SORD cause a common and potentially treatable hereditary neuropathy with implications for diabetes.</title>
        <authorList>
            <consortium name="Inherited Neuropathy Consortium"/>
            <person name="Cortese A."/>
            <person name="Zhu Y."/>
            <person name="Rebelo A.P."/>
            <person name="Negri S."/>
            <person name="Courel S."/>
            <person name="Abreu L."/>
            <person name="Bacon C.J."/>
            <person name="Bai Y."/>
            <person name="Bis-Brewer D.M."/>
            <person name="Bugiardini E."/>
            <person name="Buglo E."/>
            <person name="Danzi M.C."/>
            <person name="Feely S.M.E."/>
            <person name="Athanasiou-Fragkouli A."/>
            <person name="Haridy N.A."/>
            <person name="Isasi R."/>
            <person name="Khan A."/>
            <person name="Laura M."/>
            <person name="Magri S."/>
            <person name="Pipis M."/>
            <person name="Pisciotta C."/>
            <person name="Powell E."/>
            <person name="Rossor A.M."/>
            <person name="Saveri P."/>
            <person name="Sowden J.E."/>
            <person name="Tozza S."/>
            <person name="Vandrovcova J."/>
            <person name="Dallman J."/>
            <person name="Grignani E."/>
            <person name="Marchioni E."/>
            <person name="Scherer S.S."/>
            <person name="Tang B."/>
            <person name="Lin Z."/>
            <person name="Al-Ajmi A."/>
            <person name="Schuele R."/>
            <person name="Synofzik M."/>
            <person name="Maisonobe T."/>
            <person name="Stojkovic T."/>
            <person name="Auer-Grumbach M."/>
            <person name="Abdelhamed M.A."/>
            <person name="Hamed S.A."/>
            <person name="Zhang R."/>
            <person name="Manganelli F."/>
            <person name="Santoro L."/>
            <person name="Taroni F."/>
            <person name="Pareyson D."/>
            <person name="Houlden H."/>
            <person name="Herrmann D.N."/>
            <person name="Reilly M.M."/>
            <person name="Shy M.E."/>
            <person name="Zhai R.G."/>
            <person name="Zuchner S."/>
        </authorList>
    </citation>
    <scope>VARIANTS HMNR8 PHE-10; 100-ARG--PRO-357 DEL; PRO-110; ASP-153; 299-ARG--PRO-357 DEL AND ILE-322</scope>
    <scope>INVOLVEMENT IN HMNR8</scope>
</reference>
<reference key="21">
    <citation type="journal article" date="2020" name="Nat. Genet.">
        <authorList>
            <consortium name="Inherited Neuropathy Consortium"/>
            <person name="Cortese A."/>
            <person name="Zhu Y."/>
            <person name="Rebelo A.P."/>
            <person name="Negri S."/>
            <person name="Courel S."/>
            <person name="Abreu L."/>
            <person name="Bacon C.J."/>
            <person name="Bai Y."/>
            <person name="Bis-Brewer D.M."/>
            <person name="Bugiardini E."/>
            <person name="Buglo E."/>
            <person name="Danzi M.C."/>
            <person name="Feely S.M.E."/>
            <person name="Athanasiou-Fragkouli A."/>
            <person name="Haridy N.A."/>
            <person name="Isasi R."/>
            <person name="Khan A."/>
            <person name="Laura M."/>
            <person name="Magri S."/>
            <person name="Pipis M."/>
            <person name="Pisciotta C."/>
            <person name="Powell E."/>
            <person name="Rossor A.M."/>
            <person name="Saveri P."/>
            <person name="Sowden J.E."/>
            <person name="Tozza S."/>
            <person name="Vandrovcova J."/>
            <person name="Dallman J."/>
            <person name="Grignani E."/>
            <person name="Marchioni E."/>
            <person name="Scherer S.S."/>
            <person name="Tang B."/>
            <person name="Lin Z."/>
            <person name="Al-Ajmi A."/>
            <person name="Schuele R."/>
            <person name="Synofzik M."/>
            <person name="Maisonobe T."/>
            <person name="Stojkovic T."/>
            <person name="Auer-Grumbach M."/>
            <person name="Abdelhamed M.A."/>
            <person name="Hamed S.A."/>
            <person name="Zhang R."/>
            <person name="Manganelli F."/>
            <person name="Santoro L."/>
            <person name="Taroni F."/>
            <person name="Pareyson D."/>
            <person name="Houlden H."/>
            <person name="Herrmann D.N."/>
            <person name="Reilly M.M."/>
            <person name="Shy M.E."/>
            <person name="Zhai R.G."/>
            <person name="Zuchner S."/>
        </authorList>
    </citation>
    <scope>ERRATUM OF PUBMED:32367058</scope>
</reference>
<reference key="22">
    <citation type="journal article" date="2021" name="Ann. Clin. Transl. Neurol.">
        <title>Evaluation of SORD mutations as a novel cause of Charcot-Marie-Tooth disease.</title>
        <authorList>
            <person name="Yuan R.Y."/>
            <person name="Ye Z.L."/>
            <person name="Zhang X.R."/>
            <person name="Xu L.Q."/>
            <person name="He J."/>
        </authorList>
    </citation>
    <scope>VARIANT HMNR8 209-ARG--PRO-357 DEL</scope>
    <scope>INVOLVEMENT IN HMNR8</scope>
</reference>
<reference key="23">
    <citation type="journal article" date="2021" name="NPJ Genom. Med.">
        <title>Biallelic SORD pathogenic variants cause Chinese patients with distal hereditary motor neuropathy.</title>
        <authorList>
            <person name="Dong H.L."/>
            <person name="Li J.Q."/>
            <person name="Liu G.L."/>
            <person name="Yu H."/>
            <person name="Wu Z.Y."/>
        </authorList>
    </citation>
    <scope>VARIANT HMNR8 ARG-135</scope>
    <scope>CHARACTERIZATION OF VARIANTS HMNR8 PRO-110; ARG-135 AND ASP-153</scope>
</reference>
<dbReference type="EC" id="1.1.1.-" evidence="4 14"/>
<dbReference type="EC" id="1.1.1.4" evidence="14"/>
<dbReference type="EC" id="1.1.1.14" evidence="1"/>
<dbReference type="EC" id="1.1.1.56" evidence="14"/>
<dbReference type="EC" id="1.1.1.9" evidence="14"/>
<dbReference type="EMBL" id="U07361">
    <property type="protein sequence ID" value="AAA66064.1"/>
    <property type="molecule type" value="mRNA"/>
</dbReference>
<dbReference type="EMBL" id="L29008">
    <property type="protein sequence ID" value="AAA80565.1"/>
    <property type="molecule type" value="mRNA"/>
</dbReference>
<dbReference type="EMBL" id="L29254">
    <property type="protein sequence ID" value="AAA80566.1"/>
    <property type="molecule type" value="Genomic_DNA"/>
</dbReference>
<dbReference type="EMBL" id="L29249">
    <property type="protein sequence ID" value="AAA80566.1"/>
    <property type="status" value="JOINED"/>
    <property type="molecule type" value="Genomic_DNA"/>
</dbReference>
<dbReference type="EMBL" id="L29250">
    <property type="protein sequence ID" value="AAA80566.1"/>
    <property type="status" value="JOINED"/>
    <property type="molecule type" value="Genomic_DNA"/>
</dbReference>
<dbReference type="EMBL" id="L29251">
    <property type="protein sequence ID" value="AAA80566.1"/>
    <property type="status" value="JOINED"/>
    <property type="molecule type" value="Genomic_DNA"/>
</dbReference>
<dbReference type="EMBL" id="L29252">
    <property type="protein sequence ID" value="AAA80566.1"/>
    <property type="status" value="JOINED"/>
    <property type="molecule type" value="Genomic_DNA"/>
</dbReference>
<dbReference type="EMBL" id="L29253">
    <property type="protein sequence ID" value="AAA80566.1"/>
    <property type="status" value="JOINED"/>
    <property type="molecule type" value="Genomic_DNA"/>
</dbReference>
<dbReference type="EMBL" id="U67243">
    <property type="protein sequence ID" value="AAB61898.1"/>
    <property type="molecule type" value="Genomic_DNA"/>
</dbReference>
<dbReference type="EMBL" id="U67236">
    <property type="protein sequence ID" value="AAB61898.1"/>
    <property type="status" value="JOINED"/>
    <property type="molecule type" value="Genomic_DNA"/>
</dbReference>
<dbReference type="EMBL" id="U67237">
    <property type="protein sequence ID" value="AAB61898.1"/>
    <property type="status" value="JOINED"/>
    <property type="molecule type" value="Genomic_DNA"/>
</dbReference>
<dbReference type="EMBL" id="U67238">
    <property type="protein sequence ID" value="AAB61898.1"/>
    <property type="status" value="JOINED"/>
    <property type="molecule type" value="Genomic_DNA"/>
</dbReference>
<dbReference type="EMBL" id="U67239">
    <property type="protein sequence ID" value="AAB61898.1"/>
    <property type="status" value="JOINED"/>
    <property type="molecule type" value="Genomic_DNA"/>
</dbReference>
<dbReference type="EMBL" id="U67240">
    <property type="protein sequence ID" value="AAB61898.1"/>
    <property type="status" value="JOINED"/>
    <property type="molecule type" value="Genomic_DNA"/>
</dbReference>
<dbReference type="EMBL" id="U67241">
    <property type="protein sequence ID" value="AAB61898.1"/>
    <property type="status" value="JOINED"/>
    <property type="molecule type" value="Genomic_DNA"/>
</dbReference>
<dbReference type="EMBL" id="U67242">
    <property type="protein sequence ID" value="AAB61898.1"/>
    <property type="status" value="JOINED"/>
    <property type="molecule type" value="Genomic_DNA"/>
</dbReference>
<dbReference type="EMBL" id="AK295656">
    <property type="protein sequence ID" value="BAH12142.1"/>
    <property type="molecule type" value="mRNA"/>
</dbReference>
<dbReference type="EMBL" id="AK312444">
    <property type="protein sequence ID" value="BAG35352.1"/>
    <property type="molecule type" value="mRNA"/>
</dbReference>
<dbReference type="EMBL" id="AC090888">
    <property type="status" value="NOT_ANNOTATED_CDS"/>
    <property type="molecule type" value="Genomic_DNA"/>
</dbReference>
<dbReference type="EMBL" id="AC091117">
    <property type="status" value="NOT_ANNOTATED_CDS"/>
    <property type="molecule type" value="Genomic_DNA"/>
</dbReference>
<dbReference type="EMBL" id="BC021085">
    <property type="protein sequence ID" value="AAH21085.1"/>
    <property type="molecule type" value="mRNA"/>
</dbReference>
<dbReference type="EMBL" id="BC025295">
    <property type="protein sequence ID" value="AAH25295.1"/>
    <property type="molecule type" value="mRNA"/>
</dbReference>
<dbReference type="CCDS" id="CCDS10116.1">
    <molecule id="Q00796-1"/>
</dbReference>
<dbReference type="PIR" id="A54674">
    <property type="entry name" value="A54674"/>
</dbReference>
<dbReference type="RefSeq" id="NP_003095.2">
    <molecule id="Q00796-1"/>
    <property type="nucleotide sequence ID" value="NM_003104.6"/>
</dbReference>
<dbReference type="PDB" id="1PL6">
    <property type="method" value="X-ray"/>
    <property type="resolution" value="2.00 A"/>
    <property type="chains" value="A/B/C/D=2-357"/>
</dbReference>
<dbReference type="PDB" id="1PL7">
    <property type="method" value="X-ray"/>
    <property type="resolution" value="2.20 A"/>
    <property type="chains" value="A/B/C/D=2-357"/>
</dbReference>
<dbReference type="PDB" id="1PL8">
    <property type="method" value="X-ray"/>
    <property type="resolution" value="1.90 A"/>
    <property type="chains" value="A/B/C/D=2-357"/>
</dbReference>
<dbReference type="PDBsum" id="1PL6"/>
<dbReference type="PDBsum" id="1PL7"/>
<dbReference type="PDBsum" id="1PL8"/>
<dbReference type="SMR" id="Q00796"/>
<dbReference type="BioGRID" id="112535">
    <property type="interactions" value="106"/>
</dbReference>
<dbReference type="FunCoup" id="Q00796">
    <property type="interactions" value="661"/>
</dbReference>
<dbReference type="IntAct" id="Q00796">
    <property type="interactions" value="16"/>
</dbReference>
<dbReference type="MINT" id="Q00796"/>
<dbReference type="STRING" id="9606.ENSP00000267814"/>
<dbReference type="BindingDB" id="Q00796"/>
<dbReference type="ChEMBL" id="CHEMBL2275"/>
<dbReference type="DrugBank" id="DB04478">
    <property type="generic name" value="Cp-166572, 2-Hydroxymethyl-4-(4-N,N-Dimethylaminosulfonyl-1-Piperazino)-Pyrimidine"/>
</dbReference>
<dbReference type="DrugBank" id="DB00157">
    <property type="generic name" value="NADH"/>
</dbReference>
<dbReference type="DrugCentral" id="Q00796"/>
<dbReference type="GlyGen" id="Q00796">
    <property type="glycosylation" value="3 sites, 2 N-linked glycans (2 sites), 1 O-linked glycan (1 site)"/>
</dbReference>
<dbReference type="iPTMnet" id="Q00796"/>
<dbReference type="MetOSite" id="Q00796"/>
<dbReference type="PhosphoSitePlus" id="Q00796"/>
<dbReference type="SwissPalm" id="Q00796"/>
<dbReference type="BioMuta" id="SORD"/>
<dbReference type="DMDM" id="292495088"/>
<dbReference type="REPRODUCTION-2DPAGE" id="IPI00216057"/>
<dbReference type="jPOST" id="Q00796"/>
<dbReference type="MassIVE" id="Q00796"/>
<dbReference type="PaxDb" id="9606-ENSP00000267814"/>
<dbReference type="PeptideAtlas" id="Q00796"/>
<dbReference type="ProteomicsDB" id="57873">
    <molecule id="Q00796-1"/>
</dbReference>
<dbReference type="ProteomicsDB" id="6501"/>
<dbReference type="Pumba" id="Q00796"/>
<dbReference type="Antibodypedia" id="24307">
    <property type="antibodies" value="580 antibodies from 31 providers"/>
</dbReference>
<dbReference type="DNASU" id="6652"/>
<dbReference type="Ensembl" id="ENST00000267814.14">
    <molecule id="Q00796-1"/>
    <property type="protein sequence ID" value="ENSP00000267814.9"/>
    <property type="gene ID" value="ENSG00000140263.15"/>
</dbReference>
<dbReference type="Ensembl" id="ENST00000558789.5">
    <molecule id="Q00796-2"/>
    <property type="protein sequence ID" value="ENSP00000453904.1"/>
    <property type="gene ID" value="ENSG00000140263.15"/>
</dbReference>
<dbReference type="GeneID" id="6652"/>
<dbReference type="KEGG" id="hsa:6652"/>
<dbReference type="MANE-Select" id="ENST00000267814.14">
    <property type="protein sequence ID" value="ENSP00000267814.9"/>
    <property type="RefSeq nucleotide sequence ID" value="NM_003104.6"/>
    <property type="RefSeq protein sequence ID" value="NP_003095.2"/>
</dbReference>
<dbReference type="UCSC" id="uc001zul.5">
    <molecule id="Q00796-1"/>
    <property type="organism name" value="human"/>
</dbReference>
<dbReference type="AGR" id="HGNC:11184"/>
<dbReference type="CTD" id="6652"/>
<dbReference type="DisGeNET" id="6652"/>
<dbReference type="GeneCards" id="SORD"/>
<dbReference type="HGNC" id="HGNC:11184">
    <property type="gene designation" value="SORD"/>
</dbReference>
<dbReference type="HPA" id="ENSG00000140263">
    <property type="expression patterns" value="Tissue enhanced (cervix, liver)"/>
</dbReference>
<dbReference type="MalaCards" id="SORD"/>
<dbReference type="MIM" id="182500">
    <property type="type" value="gene"/>
</dbReference>
<dbReference type="MIM" id="618912">
    <property type="type" value="phenotype"/>
</dbReference>
<dbReference type="neXtProt" id="NX_Q00796"/>
<dbReference type="OpenTargets" id="ENSG00000140263"/>
<dbReference type="PharmGKB" id="PA36021"/>
<dbReference type="VEuPathDB" id="HostDB:ENSG00000140263"/>
<dbReference type="eggNOG" id="KOG0024">
    <property type="taxonomic scope" value="Eukaryota"/>
</dbReference>
<dbReference type="GeneTree" id="ENSGT00550000074781"/>
<dbReference type="HOGENOM" id="CLU_168382_0_0_1"/>
<dbReference type="InParanoid" id="Q00796"/>
<dbReference type="OMA" id="FETWYAM"/>
<dbReference type="OrthoDB" id="1879366at2759"/>
<dbReference type="PAN-GO" id="Q00796">
    <property type="GO annotations" value="2 GO annotations based on evolutionary models"/>
</dbReference>
<dbReference type="PhylomeDB" id="Q00796"/>
<dbReference type="TreeFam" id="TF313060"/>
<dbReference type="BRENDA" id="1.1.1.14">
    <property type="organism ID" value="2681"/>
</dbReference>
<dbReference type="PathwayCommons" id="Q00796"/>
<dbReference type="Reactome" id="R-HSA-5652227">
    <property type="pathway name" value="Fructose biosynthesis"/>
</dbReference>
<dbReference type="Reactome" id="R-HSA-5661270">
    <property type="pathway name" value="Formation of xylulose-5-phosphate"/>
</dbReference>
<dbReference type="SABIO-RK" id="Q00796"/>
<dbReference type="SignaLink" id="Q00796"/>
<dbReference type="BioGRID-ORCS" id="6652">
    <property type="hits" value="16 hits in 1157 CRISPR screens"/>
</dbReference>
<dbReference type="CD-CODE" id="DEE660B4">
    <property type="entry name" value="Stress granule"/>
</dbReference>
<dbReference type="ChiTaRS" id="SORD">
    <property type="organism name" value="human"/>
</dbReference>
<dbReference type="EvolutionaryTrace" id="Q00796"/>
<dbReference type="GeneWiki" id="SORD"/>
<dbReference type="GenomeRNAi" id="6652"/>
<dbReference type="Pharos" id="Q00796">
    <property type="development level" value="Tchem"/>
</dbReference>
<dbReference type="PRO" id="PR:Q00796"/>
<dbReference type="Proteomes" id="UP000005640">
    <property type="component" value="Chromosome 15"/>
</dbReference>
<dbReference type="RNAct" id="Q00796">
    <property type="molecule type" value="protein"/>
</dbReference>
<dbReference type="Bgee" id="ENSG00000140263">
    <property type="expression patterns" value="Expressed in right lobe of thyroid gland and 128 other cell types or tissues"/>
</dbReference>
<dbReference type="ExpressionAtlas" id="Q00796">
    <property type="expression patterns" value="baseline and differential"/>
</dbReference>
<dbReference type="GO" id="GO:0005829">
    <property type="term" value="C:cytosol"/>
    <property type="evidence" value="ECO:0000304"/>
    <property type="project" value="Reactome"/>
</dbReference>
<dbReference type="GO" id="GO:0070062">
    <property type="term" value="C:extracellular exosome"/>
    <property type="evidence" value="ECO:0000314"/>
    <property type="project" value="UniProtKB"/>
</dbReference>
<dbReference type="GO" id="GO:0005615">
    <property type="term" value="C:extracellular space"/>
    <property type="evidence" value="ECO:0000304"/>
    <property type="project" value="UniProtKB"/>
</dbReference>
<dbReference type="GO" id="GO:0016020">
    <property type="term" value="C:membrane"/>
    <property type="evidence" value="ECO:0000314"/>
    <property type="project" value="UniProtKB"/>
</dbReference>
<dbReference type="GO" id="GO:0031966">
    <property type="term" value="C:mitochondrial membrane"/>
    <property type="evidence" value="ECO:0007669"/>
    <property type="project" value="UniProtKB-SubCell"/>
</dbReference>
<dbReference type="GO" id="GO:0031514">
    <property type="term" value="C:motile cilium"/>
    <property type="evidence" value="ECO:0000250"/>
    <property type="project" value="UniProtKB"/>
</dbReference>
<dbReference type="GO" id="GO:0000721">
    <property type="term" value="F:(R,R)-butanediol dehydrogenase activity"/>
    <property type="evidence" value="ECO:0007669"/>
    <property type="project" value="UniProtKB-EC"/>
</dbReference>
<dbReference type="GO" id="GO:0030246">
    <property type="term" value="F:carbohydrate binding"/>
    <property type="evidence" value="ECO:0000303"/>
    <property type="project" value="UniProtKB"/>
</dbReference>
<dbReference type="GO" id="GO:0047833">
    <property type="term" value="F:D-sorbitol dehydrogenase (acceptor) activity"/>
    <property type="evidence" value="ECO:0007669"/>
    <property type="project" value="Ensembl"/>
</dbReference>
<dbReference type="GO" id="GO:0046526">
    <property type="term" value="F:D-xylulose reductase activity"/>
    <property type="evidence" value="ECO:0007669"/>
    <property type="project" value="UniProtKB-EC"/>
</dbReference>
<dbReference type="GO" id="GO:0042802">
    <property type="term" value="F:identical protein binding"/>
    <property type="evidence" value="ECO:0000353"/>
    <property type="project" value="IntAct"/>
</dbReference>
<dbReference type="GO" id="GO:0003939">
    <property type="term" value="F:L-iditol 2-dehydrogenase (NAD+) activity"/>
    <property type="evidence" value="ECO:0000314"/>
    <property type="project" value="UniProtKB"/>
</dbReference>
<dbReference type="GO" id="GO:0051287">
    <property type="term" value="F:NAD binding"/>
    <property type="evidence" value="ECO:0000314"/>
    <property type="project" value="UniProtKB"/>
</dbReference>
<dbReference type="GO" id="GO:0050255">
    <property type="term" value="F:ribitol 2-dehydrogenase (NAD+) activity"/>
    <property type="evidence" value="ECO:0007669"/>
    <property type="project" value="UniProtKB-EC"/>
</dbReference>
<dbReference type="GO" id="GO:0008270">
    <property type="term" value="F:zinc ion binding"/>
    <property type="evidence" value="ECO:0000314"/>
    <property type="project" value="UniProtKB"/>
</dbReference>
<dbReference type="GO" id="GO:0019640">
    <property type="term" value="P:D-glucuronate catabolic process to D-xylulose 5-phosphate"/>
    <property type="evidence" value="ECO:0007669"/>
    <property type="project" value="Ensembl"/>
</dbReference>
<dbReference type="GO" id="GO:0030317">
    <property type="term" value="P:flagellated sperm motility"/>
    <property type="evidence" value="ECO:0000250"/>
    <property type="project" value="UniProtKB"/>
</dbReference>
<dbReference type="GO" id="GO:0046370">
    <property type="term" value="P:fructose biosynthetic process"/>
    <property type="evidence" value="ECO:0000314"/>
    <property type="project" value="UniProtKB"/>
</dbReference>
<dbReference type="GO" id="GO:0006006">
    <property type="term" value="P:glucose metabolic process"/>
    <property type="evidence" value="ECO:0000304"/>
    <property type="project" value="UniProtKB"/>
</dbReference>
<dbReference type="GO" id="GO:0006062">
    <property type="term" value="P:sorbitol catabolic process"/>
    <property type="evidence" value="ECO:0000314"/>
    <property type="project" value="UniProtKB"/>
</dbReference>
<dbReference type="GO" id="GO:0051160">
    <property type="term" value="P:xylitol catabolic process"/>
    <property type="evidence" value="ECO:0000314"/>
    <property type="project" value="UniProtKB"/>
</dbReference>
<dbReference type="GO" id="GO:0051164">
    <property type="term" value="P:xylitol metabolic process"/>
    <property type="evidence" value="ECO:0000314"/>
    <property type="project" value="UniProtKB"/>
</dbReference>
<dbReference type="CDD" id="cd05285">
    <property type="entry name" value="sorbitol_DH"/>
    <property type="match status" value="1"/>
</dbReference>
<dbReference type="FunFam" id="3.40.50.720:FF:000068">
    <property type="entry name" value="Sorbitol dehydrogenase"/>
    <property type="match status" value="1"/>
</dbReference>
<dbReference type="Gene3D" id="3.90.180.10">
    <property type="entry name" value="Medium-chain alcohol dehydrogenases, catalytic domain"/>
    <property type="match status" value="1"/>
</dbReference>
<dbReference type="Gene3D" id="3.40.50.720">
    <property type="entry name" value="NAD(P)-binding Rossmann-like Domain"/>
    <property type="match status" value="1"/>
</dbReference>
<dbReference type="InterPro" id="IPR013149">
    <property type="entry name" value="ADH-like_C"/>
</dbReference>
<dbReference type="InterPro" id="IPR013154">
    <property type="entry name" value="ADH-like_N"/>
</dbReference>
<dbReference type="InterPro" id="IPR002328">
    <property type="entry name" value="ADH_Zn_CS"/>
</dbReference>
<dbReference type="InterPro" id="IPR011032">
    <property type="entry name" value="GroES-like_sf"/>
</dbReference>
<dbReference type="InterPro" id="IPR036291">
    <property type="entry name" value="NAD(P)-bd_dom_sf"/>
</dbReference>
<dbReference type="InterPro" id="IPR020843">
    <property type="entry name" value="PKS_ER"/>
</dbReference>
<dbReference type="InterPro" id="IPR045306">
    <property type="entry name" value="SDH-like"/>
</dbReference>
<dbReference type="PANTHER" id="PTHR43161">
    <property type="entry name" value="SORBITOL DEHYDROGENASE"/>
    <property type="match status" value="1"/>
</dbReference>
<dbReference type="PANTHER" id="PTHR43161:SF9">
    <property type="entry name" value="SORBITOL DEHYDROGENASE"/>
    <property type="match status" value="1"/>
</dbReference>
<dbReference type="Pfam" id="PF08240">
    <property type="entry name" value="ADH_N"/>
    <property type="match status" value="1"/>
</dbReference>
<dbReference type="Pfam" id="PF00107">
    <property type="entry name" value="ADH_zinc_N"/>
    <property type="match status" value="1"/>
</dbReference>
<dbReference type="SMART" id="SM00829">
    <property type="entry name" value="PKS_ER"/>
    <property type="match status" value="1"/>
</dbReference>
<dbReference type="SUPFAM" id="SSF50129">
    <property type="entry name" value="GroES-like"/>
    <property type="match status" value="1"/>
</dbReference>
<dbReference type="SUPFAM" id="SSF51735">
    <property type="entry name" value="NAD(P)-binding Rossmann-fold domains"/>
    <property type="match status" value="1"/>
</dbReference>
<dbReference type="PROSITE" id="PS00059">
    <property type="entry name" value="ADH_ZINC"/>
    <property type="match status" value="1"/>
</dbReference>
<protein>
    <recommendedName>
        <fullName evidence="18 22 23">Sorbitol dehydrogenase</fullName>
        <shortName evidence="18">SDH</shortName>
        <ecNumber evidence="4 14">1.1.1.-</ecNumber>
    </recommendedName>
    <alternativeName>
        <fullName evidence="26">(R,R)-butanediol dehydrogenase</fullName>
        <ecNumber evidence="14">1.1.1.4</ecNumber>
    </alternativeName>
    <alternativeName>
        <fullName>L-iditol 2-dehydrogenase</fullName>
        <ecNumber evidence="1">1.1.1.14</ecNumber>
    </alternativeName>
    <alternativeName>
        <fullName evidence="22">Polyol dehydrogenase</fullName>
    </alternativeName>
    <alternativeName>
        <fullName evidence="26">Ribitol dehydrogenase</fullName>
        <shortName>RDH</shortName>
        <ecNumber evidence="14">1.1.1.56</ecNumber>
    </alternativeName>
    <alternativeName>
        <fullName evidence="22">Xylitol dehydrogenase</fullName>
        <shortName>XDH</shortName>
        <ecNumber evidence="14">1.1.1.9</ecNumber>
    </alternativeName>
</protein>
<proteinExistence type="evidence at protein level"/>
<gene>
    <name type="primary">SORD</name>
</gene>